<reference key="1">
    <citation type="journal article" date="2002" name="Nature">
        <title>Sequence and analysis of chromosome 2 of Dictyostelium discoideum.</title>
        <authorList>
            <person name="Gloeckner G."/>
            <person name="Eichinger L."/>
            <person name="Szafranski K."/>
            <person name="Pachebat J.A."/>
            <person name="Bankier A.T."/>
            <person name="Dear P.H."/>
            <person name="Lehmann R."/>
            <person name="Baumgart C."/>
            <person name="Parra G."/>
            <person name="Abril J.F."/>
            <person name="Guigo R."/>
            <person name="Kumpf K."/>
            <person name="Tunggal B."/>
            <person name="Cox E.C."/>
            <person name="Quail M.A."/>
            <person name="Platzer M."/>
            <person name="Rosenthal A."/>
            <person name="Noegel A.A."/>
        </authorList>
    </citation>
    <scope>NUCLEOTIDE SEQUENCE [LARGE SCALE GENOMIC DNA]</scope>
    <source>
        <strain>AX4</strain>
    </source>
</reference>
<reference key="2">
    <citation type="journal article" date="2005" name="Nature">
        <title>The genome of the social amoeba Dictyostelium discoideum.</title>
        <authorList>
            <person name="Eichinger L."/>
            <person name="Pachebat J.A."/>
            <person name="Gloeckner G."/>
            <person name="Rajandream M.A."/>
            <person name="Sucgang R."/>
            <person name="Berriman M."/>
            <person name="Song J."/>
            <person name="Olsen R."/>
            <person name="Szafranski K."/>
            <person name="Xu Q."/>
            <person name="Tunggal B."/>
            <person name="Kummerfeld S."/>
            <person name="Madera M."/>
            <person name="Konfortov B.A."/>
            <person name="Rivero F."/>
            <person name="Bankier A.T."/>
            <person name="Lehmann R."/>
            <person name="Hamlin N."/>
            <person name="Davies R."/>
            <person name="Gaudet P."/>
            <person name="Fey P."/>
            <person name="Pilcher K."/>
            <person name="Chen G."/>
            <person name="Saunders D."/>
            <person name="Sodergren E.J."/>
            <person name="Davis P."/>
            <person name="Kerhornou A."/>
            <person name="Nie X."/>
            <person name="Hall N."/>
            <person name="Anjard C."/>
            <person name="Hemphill L."/>
            <person name="Bason N."/>
            <person name="Farbrother P."/>
            <person name="Desany B."/>
            <person name="Just E."/>
            <person name="Morio T."/>
            <person name="Rost R."/>
            <person name="Churcher C.M."/>
            <person name="Cooper J."/>
            <person name="Haydock S."/>
            <person name="van Driessche N."/>
            <person name="Cronin A."/>
            <person name="Goodhead I."/>
            <person name="Muzny D.M."/>
            <person name="Mourier T."/>
            <person name="Pain A."/>
            <person name="Lu M."/>
            <person name="Harper D."/>
            <person name="Lindsay R."/>
            <person name="Hauser H."/>
            <person name="James K.D."/>
            <person name="Quiles M."/>
            <person name="Madan Babu M."/>
            <person name="Saito T."/>
            <person name="Buchrieser C."/>
            <person name="Wardroper A."/>
            <person name="Felder M."/>
            <person name="Thangavelu M."/>
            <person name="Johnson D."/>
            <person name="Knights A."/>
            <person name="Loulseged H."/>
            <person name="Mungall K.L."/>
            <person name="Oliver K."/>
            <person name="Price C."/>
            <person name="Quail M.A."/>
            <person name="Urushihara H."/>
            <person name="Hernandez J."/>
            <person name="Rabbinowitsch E."/>
            <person name="Steffen D."/>
            <person name="Sanders M."/>
            <person name="Ma J."/>
            <person name="Kohara Y."/>
            <person name="Sharp S."/>
            <person name="Simmonds M.N."/>
            <person name="Spiegler S."/>
            <person name="Tivey A."/>
            <person name="Sugano S."/>
            <person name="White B."/>
            <person name="Walker D."/>
            <person name="Woodward J.R."/>
            <person name="Winckler T."/>
            <person name="Tanaka Y."/>
            <person name="Shaulsky G."/>
            <person name="Schleicher M."/>
            <person name="Weinstock G.M."/>
            <person name="Rosenthal A."/>
            <person name="Cox E.C."/>
            <person name="Chisholm R.L."/>
            <person name="Gibbs R.A."/>
            <person name="Loomis W.F."/>
            <person name="Platzer M."/>
            <person name="Kay R.R."/>
            <person name="Williams J.G."/>
            <person name="Dear P.H."/>
            <person name="Noegel A.A."/>
            <person name="Barrell B.G."/>
            <person name="Kuspa A."/>
        </authorList>
    </citation>
    <scope>NUCLEOTIDE SEQUENCE [LARGE SCALE GENOMIC DNA]</scope>
    <source>
        <strain>AX4</strain>
    </source>
</reference>
<evidence type="ECO:0000250" key="1"/>
<evidence type="ECO:0000255" key="2"/>
<evidence type="ECO:0000305" key="3"/>
<organism>
    <name type="scientific">Dictyostelium discoideum</name>
    <name type="common">Social amoeba</name>
    <dbReference type="NCBI Taxonomy" id="44689"/>
    <lineage>
        <taxon>Eukaryota</taxon>
        <taxon>Amoebozoa</taxon>
        <taxon>Evosea</taxon>
        <taxon>Eumycetozoa</taxon>
        <taxon>Dictyostelia</taxon>
        <taxon>Dictyosteliales</taxon>
        <taxon>Dictyosteliaceae</taxon>
        <taxon>Dictyostelium</taxon>
    </lineage>
</organism>
<name>MSH2_DICDI</name>
<accession>Q553L4</accession>
<accession>Q86HA1</accession>
<proteinExistence type="inferred from homology"/>
<keyword id="KW-0067">ATP-binding</keyword>
<keyword id="KW-0131">Cell cycle</keyword>
<keyword id="KW-0227">DNA damage</keyword>
<keyword id="KW-0234">DNA repair</keyword>
<keyword id="KW-0238">DNA-binding</keyword>
<keyword id="KW-0547">Nucleotide-binding</keyword>
<keyword id="KW-0539">Nucleus</keyword>
<keyword id="KW-1185">Reference proteome</keyword>
<gene>
    <name type="primary">msh2</name>
    <name type="ORF">DDB_G0275809</name>
</gene>
<protein>
    <recommendedName>
        <fullName>DNA mismatch repair protein Msh2</fullName>
    </recommendedName>
    <alternativeName>
        <fullName>MutS protein homolog 2</fullName>
    </alternativeName>
</protein>
<sequence>MSDNEQEESSQVVLKEDKTFVTFFQSLVSSNEDTDTIRLFDRKGYYSIHGEDAVFVAMMHFKSKKSLKYWSISDPNPKKKIKIDNDGSLTTTASSSQQQQQELGLAVLTIRQGYEFENIVKELLDEKKKIEIWSMKPNSKQQWELIKKGSPGNTQMFEDVLLNGNCEGSVMMALKVTREKGSIVFGISFGDATFKTIGVSQFMDNDNLSNLSSFIMQMSVKECLLCCDQKNYDYQKVKEKLSDAGIPFTELPKSDFSSKNAEQDLTRLLGSVKNNLPDIEQEHAIQSASCLIKHLDLLSNPNYFGKFKLEKYDLDRYMKLDSSSFKGLHIIDLKDSSVSAAAGGGGAGGASSSSNKDQSLYNLLNQCNTPMGSRLLLQWVKQPLLNAEEIEARLNFVEAFYNDLELRQSLRSNDLKKIGDLDRLSKKLHGQKATLEDCVNLYGIVTRLPVVLQSLNNHSSIHQELIKVNFIESLESIISDFAKFCAMVEKTIDLDLANDKHEYVIRSSFDETLRGIQLKKDQISNKIERFRVDIADDLNLDEAKVKLHYSEKDMFLLRISRKDEVAIRDKKKYIVHATAKDGVRFATREIDTLNEAYKKWSAEYLDKQDGLAKRTLQIAASFVPLIEDLSSLIATLDVFVTLSHVSSIAPIPFIRPEIIPLGSDENGAGTVIIGGRHPCVEIQDNVNFIANDIDLTRGQSQFQIITGPNMGGKSTFIRQVGLIVLMAQIGCFVPAQKATIAVVDCILSRVGAGDSQLRGVSTFMAEMLETSYILKVATKNSLIIIDELGRGTSTYDGFGLAWGIAEYICNQIGGFCLFATHFHELTILSDLLPMVKNLHVSASTQNNTFTLLYKVEQGPCDQSFGIHVAILANFPSQVIENAKQKAKELESFESNTLKQNHNKFLEEFKEINFNSNDVEKSLSLVNSLLNKYSIDIN</sequence>
<feature type="chain" id="PRO_0000328238" description="DNA mismatch repair protein Msh2">
    <location>
        <begin position="1"/>
        <end position="937"/>
    </location>
</feature>
<feature type="region of interest" description="Interaction with exo1" evidence="1">
    <location>
        <begin position="635"/>
        <end position="709"/>
    </location>
</feature>
<feature type="binding site" evidence="2">
    <location>
        <begin position="707"/>
        <end position="714"/>
    </location>
    <ligand>
        <name>ATP</name>
        <dbReference type="ChEBI" id="CHEBI:30616"/>
    </ligand>
</feature>
<dbReference type="EMBL" id="AAFI02000013">
    <property type="protein sequence ID" value="EAL69655.1"/>
    <property type="molecule type" value="Genomic_DNA"/>
</dbReference>
<dbReference type="RefSeq" id="XP_643399.1">
    <property type="nucleotide sequence ID" value="XM_638307.1"/>
</dbReference>
<dbReference type="SMR" id="Q553L4"/>
<dbReference type="FunCoup" id="Q553L4">
    <property type="interactions" value="1185"/>
</dbReference>
<dbReference type="STRING" id="44689.Q553L4"/>
<dbReference type="PaxDb" id="44689-DDB0229897"/>
<dbReference type="EnsemblProtists" id="EAL69655">
    <property type="protein sequence ID" value="EAL69655"/>
    <property type="gene ID" value="DDB_G0275809"/>
</dbReference>
<dbReference type="GeneID" id="8619985"/>
<dbReference type="KEGG" id="ddi:DDB_G0275809"/>
<dbReference type="dictyBase" id="DDB_G0275809">
    <property type="gene designation" value="msh2"/>
</dbReference>
<dbReference type="VEuPathDB" id="AmoebaDB:DDB_G0275809"/>
<dbReference type="eggNOG" id="KOG0219">
    <property type="taxonomic scope" value="Eukaryota"/>
</dbReference>
<dbReference type="HOGENOM" id="CLU_002472_10_0_1"/>
<dbReference type="InParanoid" id="Q553L4"/>
<dbReference type="OMA" id="LVRFPQK"/>
<dbReference type="PhylomeDB" id="Q553L4"/>
<dbReference type="Reactome" id="R-DDI-5358565">
    <property type="pathway name" value="Mismatch repair (MMR) directed by MSH2:MSH6 (MutSalpha)"/>
</dbReference>
<dbReference type="Reactome" id="R-DDI-5358606">
    <property type="pathway name" value="Mismatch repair (MMR) directed by MSH2:MSH3 (MutSbeta)"/>
</dbReference>
<dbReference type="PRO" id="PR:Q553L4"/>
<dbReference type="Proteomes" id="UP000002195">
    <property type="component" value="Chromosome 2"/>
</dbReference>
<dbReference type="GO" id="GO:0032301">
    <property type="term" value="C:MutSalpha complex"/>
    <property type="evidence" value="ECO:0000250"/>
    <property type="project" value="dictyBase"/>
</dbReference>
<dbReference type="GO" id="GO:0032302">
    <property type="term" value="C:MutSbeta complex"/>
    <property type="evidence" value="ECO:0000250"/>
    <property type="project" value="dictyBase"/>
</dbReference>
<dbReference type="GO" id="GO:0005634">
    <property type="term" value="C:nucleus"/>
    <property type="evidence" value="ECO:0000318"/>
    <property type="project" value="GO_Central"/>
</dbReference>
<dbReference type="GO" id="GO:0005524">
    <property type="term" value="F:ATP binding"/>
    <property type="evidence" value="ECO:0000250"/>
    <property type="project" value="dictyBase"/>
</dbReference>
<dbReference type="GO" id="GO:0140664">
    <property type="term" value="F:ATP-dependent DNA damage sensor activity"/>
    <property type="evidence" value="ECO:0007669"/>
    <property type="project" value="InterPro"/>
</dbReference>
<dbReference type="GO" id="GO:0030983">
    <property type="term" value="F:mismatched DNA binding"/>
    <property type="evidence" value="ECO:0000250"/>
    <property type="project" value="dictyBase"/>
</dbReference>
<dbReference type="GO" id="GO:0006281">
    <property type="term" value="P:DNA repair"/>
    <property type="evidence" value="ECO:0000250"/>
    <property type="project" value="dictyBase"/>
</dbReference>
<dbReference type="GO" id="GO:0006298">
    <property type="term" value="P:mismatch repair"/>
    <property type="evidence" value="ECO:0000250"/>
    <property type="project" value="dictyBase"/>
</dbReference>
<dbReference type="GO" id="GO:0006312">
    <property type="term" value="P:mitotic recombination"/>
    <property type="evidence" value="ECO:0000318"/>
    <property type="project" value="GO_Central"/>
</dbReference>
<dbReference type="GO" id="GO:0006301">
    <property type="term" value="P:postreplication repair"/>
    <property type="evidence" value="ECO:0000250"/>
    <property type="project" value="dictyBase"/>
</dbReference>
<dbReference type="CDD" id="cd03285">
    <property type="entry name" value="ABC_MSH2_euk"/>
    <property type="match status" value="1"/>
</dbReference>
<dbReference type="FunFam" id="1.10.1420.10:FF:000105">
    <property type="entry name" value="DNA mismatch repair protein Msh2"/>
    <property type="match status" value="1"/>
</dbReference>
<dbReference type="FunFam" id="3.30.420.110:FF:000051">
    <property type="entry name" value="DNA mismatch repair protein Msh2"/>
    <property type="match status" value="1"/>
</dbReference>
<dbReference type="FunFam" id="3.40.1170.10:FF:000023">
    <property type="entry name" value="DNA mismatch repair protein Msh2"/>
    <property type="match status" value="1"/>
</dbReference>
<dbReference type="FunFam" id="3.40.50.300:FF:005949">
    <property type="entry name" value="DNA mismatch repair protein Msh2"/>
    <property type="match status" value="1"/>
</dbReference>
<dbReference type="Gene3D" id="1.10.1420.10">
    <property type="match status" value="2"/>
</dbReference>
<dbReference type="Gene3D" id="3.40.1170.10">
    <property type="entry name" value="DNA repair protein MutS, domain I"/>
    <property type="match status" value="1"/>
</dbReference>
<dbReference type="Gene3D" id="3.30.420.110">
    <property type="entry name" value="MutS, connector domain"/>
    <property type="match status" value="1"/>
</dbReference>
<dbReference type="Gene3D" id="3.40.50.300">
    <property type="entry name" value="P-loop containing nucleotide triphosphate hydrolases"/>
    <property type="match status" value="1"/>
</dbReference>
<dbReference type="InterPro" id="IPR011184">
    <property type="entry name" value="DNA_mismatch_repair_Msh2"/>
</dbReference>
<dbReference type="InterPro" id="IPR000432">
    <property type="entry name" value="DNA_mismatch_repair_MutS_C"/>
</dbReference>
<dbReference type="InterPro" id="IPR007861">
    <property type="entry name" value="DNA_mismatch_repair_MutS_clamp"/>
</dbReference>
<dbReference type="InterPro" id="IPR007696">
    <property type="entry name" value="DNA_mismatch_repair_MutS_core"/>
</dbReference>
<dbReference type="InterPro" id="IPR016151">
    <property type="entry name" value="DNA_mismatch_repair_MutS_N"/>
</dbReference>
<dbReference type="InterPro" id="IPR036187">
    <property type="entry name" value="DNA_mismatch_repair_MutS_sf"/>
</dbReference>
<dbReference type="InterPro" id="IPR007860">
    <property type="entry name" value="DNA_mmatch_repair_MutS_con_dom"/>
</dbReference>
<dbReference type="InterPro" id="IPR032642">
    <property type="entry name" value="Msh2_ATP-bd"/>
</dbReference>
<dbReference type="InterPro" id="IPR045076">
    <property type="entry name" value="MutS"/>
</dbReference>
<dbReference type="InterPro" id="IPR036678">
    <property type="entry name" value="MutS_con_dom_sf"/>
</dbReference>
<dbReference type="InterPro" id="IPR027417">
    <property type="entry name" value="P-loop_NTPase"/>
</dbReference>
<dbReference type="PANTHER" id="PTHR11361:SF35">
    <property type="entry name" value="DNA MISMATCH REPAIR PROTEIN MSH2"/>
    <property type="match status" value="1"/>
</dbReference>
<dbReference type="PANTHER" id="PTHR11361">
    <property type="entry name" value="DNA MISMATCH REPAIR PROTEIN MUTS FAMILY MEMBER"/>
    <property type="match status" value="1"/>
</dbReference>
<dbReference type="Pfam" id="PF05188">
    <property type="entry name" value="MutS_II"/>
    <property type="match status" value="1"/>
</dbReference>
<dbReference type="Pfam" id="PF05192">
    <property type="entry name" value="MutS_III"/>
    <property type="match status" value="1"/>
</dbReference>
<dbReference type="Pfam" id="PF05190">
    <property type="entry name" value="MutS_IV"/>
    <property type="match status" value="1"/>
</dbReference>
<dbReference type="Pfam" id="PF00488">
    <property type="entry name" value="MutS_V"/>
    <property type="match status" value="1"/>
</dbReference>
<dbReference type="PIRSF" id="PIRSF005813">
    <property type="entry name" value="MSH2"/>
    <property type="match status" value="1"/>
</dbReference>
<dbReference type="SMART" id="SM00534">
    <property type="entry name" value="MUTSac"/>
    <property type="match status" value="1"/>
</dbReference>
<dbReference type="SMART" id="SM00533">
    <property type="entry name" value="MUTSd"/>
    <property type="match status" value="1"/>
</dbReference>
<dbReference type="SUPFAM" id="SSF53150">
    <property type="entry name" value="DNA repair protein MutS, domain II"/>
    <property type="match status" value="1"/>
</dbReference>
<dbReference type="SUPFAM" id="SSF48334">
    <property type="entry name" value="DNA repair protein MutS, domain III"/>
    <property type="match status" value="1"/>
</dbReference>
<dbReference type="SUPFAM" id="SSF52540">
    <property type="entry name" value="P-loop containing nucleoside triphosphate hydrolases"/>
    <property type="match status" value="1"/>
</dbReference>
<dbReference type="PROSITE" id="PS00486">
    <property type="entry name" value="DNA_MISMATCH_REPAIR_2"/>
    <property type="match status" value="1"/>
</dbReference>
<comment type="function">
    <text evidence="1">Component of the post-replicative DNA mismatch repair system (MMR). Forms two different heterodimers: MutS alpha (msh2-msh6 heterodimer) and MutS beta (msh2-msh3 heterodimer) which binds to DNA mismatches thereby initiating DNA repair. When bound, heterodimers bend the DNA helix. MutS alpha recognizes single base mismatches and dinucleotide insertion-deletion loops (IDL) in the DNA. MutS beta recognizes larger insertion-deletion loops. After mismatch binding, MutS alpha or beta forms a ternary complex with the MutL alpha heterodimer, which is thought to be responsible for directing the downstream MMR events, including strand discrimination, excision, and resynthesis. ATP binding and hydrolysis play a pivotal role in mismatch repair functions. The ATPase activity associated with MutS alpha regulates binding similar to a molecular switch: mismatched DNA provokes ADP--&gt;ATP exchange, resulting in a discernible conformational transition that converts MutS alpha into a sliding clamp capable of hydrolysis-independent diffusion along the DNA backbone. This transition is crucial for mismatch repair. MutS alpha may also play a role in DNA homologous recombination repair (By similarity).</text>
</comment>
<comment type="subunit">
    <text evidence="1">Heterodimer consisting of msh2-msh6 (MutS alpha) or msh2-msh3 (MutS beta). Both heterodimers form a ternary complex with MutL alpha (mlh1-pms1). Interacts with exo1 (By similarity).</text>
</comment>
<comment type="subcellular location">
    <subcellularLocation>
        <location evidence="3">Nucleus</location>
    </subcellularLocation>
</comment>
<comment type="similarity">
    <text evidence="3">Belongs to the DNA mismatch repair MutS family.</text>
</comment>